<gene>
    <name evidence="1" type="primary">hcaF</name>
    <name type="ordered locus">ECIAI39_2740</name>
</gene>
<feature type="chain" id="PRO_1000186974" description="3-phenylpropionate/cinnamic acid dioxygenase subunit beta">
    <location>
        <begin position="1"/>
        <end position="172"/>
    </location>
</feature>
<sequence>MSAQVSLELHHRISQFLFHEASLLDDWKFRDWLAQLDEEIRYTMRTTVNAQTRDRRKGVQPPTTWIFNDTKDQLERRIARLETGMAWAEEPPSRTRHLISNCQVSETDIPNVFAVRVNYLLYRAQKERDETFYVGTRFDKVRRLEDDNWRLLERDIVLDQAVITSHNLSVLF</sequence>
<reference key="1">
    <citation type="journal article" date="2009" name="PLoS Genet.">
        <title>Organised genome dynamics in the Escherichia coli species results in highly diverse adaptive paths.</title>
        <authorList>
            <person name="Touchon M."/>
            <person name="Hoede C."/>
            <person name="Tenaillon O."/>
            <person name="Barbe V."/>
            <person name="Baeriswyl S."/>
            <person name="Bidet P."/>
            <person name="Bingen E."/>
            <person name="Bonacorsi S."/>
            <person name="Bouchier C."/>
            <person name="Bouvet O."/>
            <person name="Calteau A."/>
            <person name="Chiapello H."/>
            <person name="Clermont O."/>
            <person name="Cruveiller S."/>
            <person name="Danchin A."/>
            <person name="Diard M."/>
            <person name="Dossat C."/>
            <person name="Karoui M.E."/>
            <person name="Frapy E."/>
            <person name="Garry L."/>
            <person name="Ghigo J.M."/>
            <person name="Gilles A.M."/>
            <person name="Johnson J."/>
            <person name="Le Bouguenec C."/>
            <person name="Lescat M."/>
            <person name="Mangenot S."/>
            <person name="Martinez-Jehanne V."/>
            <person name="Matic I."/>
            <person name="Nassif X."/>
            <person name="Oztas S."/>
            <person name="Petit M.A."/>
            <person name="Pichon C."/>
            <person name="Rouy Z."/>
            <person name="Ruf C.S."/>
            <person name="Schneider D."/>
            <person name="Tourret J."/>
            <person name="Vacherie B."/>
            <person name="Vallenet D."/>
            <person name="Medigue C."/>
            <person name="Rocha E.P.C."/>
            <person name="Denamur E."/>
        </authorList>
    </citation>
    <scope>NUCLEOTIDE SEQUENCE [LARGE SCALE GENOMIC DNA]</scope>
    <source>
        <strain>IAI39 / ExPEC</strain>
    </source>
</reference>
<comment type="function">
    <text evidence="1">Part of the multicomponent 3-phenylpropionate dioxygenase. Converts 3-phenylpropionic acid (PP) and cinnamic acid (CI) into 3-phenylpropionate-dihydrodiol (PP-dihydrodiol) and cinnamic acid-dihydrodiol (CI-dihydrodiol), respectively.</text>
</comment>
<comment type="catalytic activity">
    <reaction evidence="1">
        <text>3-phenylpropanoate + NADH + O2 + H(+) = 3-(cis-5,6-dihydroxycyclohexa-1,3-dien-1-yl)propanoate + NAD(+)</text>
        <dbReference type="Rhea" id="RHEA:20357"/>
        <dbReference type="ChEBI" id="CHEBI:15378"/>
        <dbReference type="ChEBI" id="CHEBI:15379"/>
        <dbReference type="ChEBI" id="CHEBI:51057"/>
        <dbReference type="ChEBI" id="CHEBI:57540"/>
        <dbReference type="ChEBI" id="CHEBI:57945"/>
        <dbReference type="ChEBI" id="CHEBI:60087"/>
        <dbReference type="EC" id="1.14.12.19"/>
    </reaction>
</comment>
<comment type="catalytic activity">
    <reaction evidence="1">
        <text>(E)-cinnamate + NADH + O2 + H(+) = (2E)-3-(cis-5,6-dihydroxycyclohexa-1,3-dien-1-yl)prop-2-enoate + NAD(+)</text>
        <dbReference type="Rhea" id="RHEA:25058"/>
        <dbReference type="ChEBI" id="CHEBI:15378"/>
        <dbReference type="ChEBI" id="CHEBI:15379"/>
        <dbReference type="ChEBI" id="CHEBI:15669"/>
        <dbReference type="ChEBI" id="CHEBI:57540"/>
        <dbReference type="ChEBI" id="CHEBI:57945"/>
        <dbReference type="ChEBI" id="CHEBI:61451"/>
        <dbReference type="EC" id="1.14.12.19"/>
    </reaction>
</comment>
<comment type="pathway">
    <text evidence="1">Aromatic compound metabolism; 3-phenylpropanoate degradation.</text>
</comment>
<comment type="subunit">
    <text evidence="1">This dioxygenase system consists of four proteins: the two subunits of the hydroxylase component (HcaE and HcaF), a ferredoxin (HcaC) and a ferredoxin reductase (HcaD).</text>
</comment>
<comment type="similarity">
    <text evidence="1">Belongs to the bacterial ring-hydroxylating dioxygenase beta subunit family.</text>
</comment>
<protein>
    <recommendedName>
        <fullName evidence="1">3-phenylpropionate/cinnamic acid dioxygenase subunit beta</fullName>
        <ecNumber evidence="1">1.14.12.19</ecNumber>
    </recommendedName>
</protein>
<dbReference type="EC" id="1.14.12.19" evidence="1"/>
<dbReference type="EMBL" id="CU928164">
    <property type="protein sequence ID" value="CAR18862.1"/>
    <property type="molecule type" value="Genomic_DNA"/>
</dbReference>
<dbReference type="RefSeq" id="WP_001276076.1">
    <property type="nucleotide sequence ID" value="NC_011750.1"/>
</dbReference>
<dbReference type="RefSeq" id="YP_002408678.1">
    <property type="nucleotide sequence ID" value="NC_011750.1"/>
</dbReference>
<dbReference type="SMR" id="B7NRI8"/>
<dbReference type="STRING" id="585057.ECIAI39_2740"/>
<dbReference type="KEGG" id="ect:ECIAI39_2740"/>
<dbReference type="PATRIC" id="fig|585057.6.peg.2849"/>
<dbReference type="HOGENOM" id="CLU_102527_1_1_6"/>
<dbReference type="UniPathway" id="UPA00714"/>
<dbReference type="Proteomes" id="UP000000749">
    <property type="component" value="Chromosome"/>
</dbReference>
<dbReference type="GO" id="GO:0008695">
    <property type="term" value="F:3-phenylpropionate dioxygenase activity"/>
    <property type="evidence" value="ECO:0007669"/>
    <property type="project" value="UniProtKB-UniRule"/>
</dbReference>
<dbReference type="GO" id="GO:0019380">
    <property type="term" value="P:3-phenylpropionate catabolic process"/>
    <property type="evidence" value="ECO:0007669"/>
    <property type="project" value="UniProtKB-UniRule"/>
</dbReference>
<dbReference type="CDD" id="cd00667">
    <property type="entry name" value="ring_hydroxylating_dioxygenases_beta"/>
    <property type="match status" value="1"/>
</dbReference>
<dbReference type="FunFam" id="3.10.450.50:FF:000008">
    <property type="entry name" value="3-phenylpropionate/cinnamic acid dioxygenase subunit beta"/>
    <property type="match status" value="1"/>
</dbReference>
<dbReference type="Gene3D" id="3.10.450.50">
    <property type="match status" value="1"/>
</dbReference>
<dbReference type="HAMAP" id="MF_01649">
    <property type="entry name" value="HcaF"/>
    <property type="match status" value="1"/>
</dbReference>
<dbReference type="InterPro" id="IPR054881">
    <property type="entry name" value="3PPDioc_HcaF"/>
</dbReference>
<dbReference type="InterPro" id="IPR023712">
    <property type="entry name" value="HcaF"/>
</dbReference>
<dbReference type="InterPro" id="IPR032710">
    <property type="entry name" value="NTF2-like_dom_sf"/>
</dbReference>
<dbReference type="InterPro" id="IPR000391">
    <property type="entry name" value="Rng_hydr_dOase-bsu"/>
</dbReference>
<dbReference type="NCBIfam" id="NF042947">
    <property type="entry name" value="3PPDioc_HcaF"/>
    <property type="match status" value="1"/>
</dbReference>
<dbReference type="NCBIfam" id="NF007479">
    <property type="entry name" value="PRK10069.1"/>
    <property type="match status" value="1"/>
</dbReference>
<dbReference type="PANTHER" id="PTHR41534:SF2">
    <property type="entry name" value="3-PHENYLPROPIONATE_CINNAMIC ACID DIOXYGENASE SUBUNIT BETA"/>
    <property type="match status" value="1"/>
</dbReference>
<dbReference type="PANTHER" id="PTHR41534">
    <property type="entry name" value="BLR3401 PROTEIN"/>
    <property type="match status" value="1"/>
</dbReference>
<dbReference type="Pfam" id="PF00866">
    <property type="entry name" value="Ring_hydroxyl_B"/>
    <property type="match status" value="1"/>
</dbReference>
<dbReference type="SUPFAM" id="SSF54427">
    <property type="entry name" value="NTF2-like"/>
    <property type="match status" value="1"/>
</dbReference>
<proteinExistence type="inferred from homology"/>
<keyword id="KW-0058">Aromatic hydrocarbons catabolism</keyword>
<keyword id="KW-0223">Dioxygenase</keyword>
<keyword id="KW-0520">NAD</keyword>
<keyword id="KW-0560">Oxidoreductase</keyword>
<accession>B7NRI8</accession>
<evidence type="ECO:0000255" key="1">
    <source>
        <dbReference type="HAMAP-Rule" id="MF_01649"/>
    </source>
</evidence>
<name>HCAF_ECO7I</name>
<organism>
    <name type="scientific">Escherichia coli O7:K1 (strain IAI39 / ExPEC)</name>
    <dbReference type="NCBI Taxonomy" id="585057"/>
    <lineage>
        <taxon>Bacteria</taxon>
        <taxon>Pseudomonadati</taxon>
        <taxon>Pseudomonadota</taxon>
        <taxon>Gammaproteobacteria</taxon>
        <taxon>Enterobacterales</taxon>
        <taxon>Enterobacteriaceae</taxon>
        <taxon>Escherichia</taxon>
    </lineage>
</organism>